<dbReference type="EMBL" id="AF077345">
    <property type="protein sequence ID" value="AAD12542.1"/>
    <property type="molecule type" value="Genomic_DNA"/>
</dbReference>
<dbReference type="EMBL" id="AF077344">
    <property type="protein sequence ID" value="AAD12542.1"/>
    <property type="status" value="JOINED"/>
    <property type="molecule type" value="Genomic_DNA"/>
</dbReference>
<dbReference type="EMBL" id="AY358376">
    <property type="protein sequence ID" value="AAQ88742.1"/>
    <property type="status" value="ALT_INIT"/>
    <property type="molecule type" value="mRNA"/>
</dbReference>
<dbReference type="EMBL" id="AK313316">
    <property type="protein sequence ID" value="BAG36121.1"/>
    <property type="molecule type" value="mRNA"/>
</dbReference>
<dbReference type="EMBL" id="BC104415">
    <property type="protein sequence ID" value="AAI04416.1"/>
    <property type="molecule type" value="mRNA"/>
</dbReference>
<dbReference type="CCDS" id="CCDS10927.3"/>
<dbReference type="RefSeq" id="NP_005743.5">
    <property type="nucleotide sequence ID" value="NM_005752.6"/>
</dbReference>
<dbReference type="SMR" id="O75596"/>
<dbReference type="BioGRID" id="115446">
    <property type="interactions" value="51"/>
</dbReference>
<dbReference type="FunCoup" id="O75596">
    <property type="interactions" value="161"/>
</dbReference>
<dbReference type="IntAct" id="O75596">
    <property type="interactions" value="51"/>
</dbReference>
<dbReference type="STRING" id="9606.ENSP00000499168"/>
<dbReference type="iPTMnet" id="O75596"/>
<dbReference type="PhosphoSitePlus" id="O75596"/>
<dbReference type="BioMuta" id="CLEC3A"/>
<dbReference type="MassIVE" id="O75596"/>
<dbReference type="PaxDb" id="9606-ENSP00000299642"/>
<dbReference type="PeptideAtlas" id="O75596"/>
<dbReference type="ProteomicsDB" id="50105"/>
<dbReference type="Antibodypedia" id="30410">
    <property type="antibodies" value="62 antibodies from 13 providers"/>
</dbReference>
<dbReference type="DNASU" id="10143"/>
<dbReference type="Ensembl" id="ENST00000299642.10">
    <property type="protein sequence ID" value="ENSP00000299642.5"/>
    <property type="gene ID" value="ENSG00000166509.12"/>
</dbReference>
<dbReference type="GeneID" id="10143"/>
<dbReference type="KEGG" id="hsa:10143"/>
<dbReference type="MANE-Select" id="ENST00000299642.10">
    <property type="protein sequence ID" value="ENSP00000299642.5"/>
    <property type="RefSeq nucleotide sequence ID" value="NM_005752.6"/>
    <property type="RefSeq protein sequence ID" value="NP_005743.5"/>
</dbReference>
<dbReference type="AGR" id="HGNC:2052"/>
<dbReference type="CTD" id="10143"/>
<dbReference type="DisGeNET" id="10143"/>
<dbReference type="GeneCards" id="CLEC3A"/>
<dbReference type="HGNC" id="HGNC:2052">
    <property type="gene designation" value="CLEC3A"/>
</dbReference>
<dbReference type="HPA" id="ENSG00000166509">
    <property type="expression patterns" value="Tissue enhanced (breast, urinary bladder)"/>
</dbReference>
<dbReference type="MIM" id="613588">
    <property type="type" value="gene"/>
</dbReference>
<dbReference type="neXtProt" id="NX_O75596"/>
<dbReference type="OpenTargets" id="ENSG00000166509"/>
<dbReference type="PharmGKB" id="PA26578"/>
<dbReference type="VEuPathDB" id="HostDB:ENSG00000166509"/>
<dbReference type="eggNOG" id="KOG4297">
    <property type="taxonomic scope" value="Eukaryota"/>
</dbReference>
<dbReference type="GeneTree" id="ENSGT00950000183186"/>
<dbReference type="InParanoid" id="O75596"/>
<dbReference type="OMA" id="RYICEFL"/>
<dbReference type="OrthoDB" id="10032136at2759"/>
<dbReference type="PAN-GO" id="O75596">
    <property type="GO annotations" value="2 GO annotations based on evolutionary models"/>
</dbReference>
<dbReference type="PhylomeDB" id="O75596"/>
<dbReference type="TreeFam" id="TF330481"/>
<dbReference type="PathwayCommons" id="O75596"/>
<dbReference type="SignaLink" id="O75596"/>
<dbReference type="BioGRID-ORCS" id="10143">
    <property type="hits" value="9 hits in 1126 CRISPR screens"/>
</dbReference>
<dbReference type="GenomeRNAi" id="10143"/>
<dbReference type="Pharos" id="O75596">
    <property type="development level" value="Tdark"/>
</dbReference>
<dbReference type="PRO" id="PR:O75596"/>
<dbReference type="Proteomes" id="UP000005640">
    <property type="component" value="Chromosome 16"/>
</dbReference>
<dbReference type="RNAct" id="O75596">
    <property type="molecule type" value="protein"/>
</dbReference>
<dbReference type="Bgee" id="ENSG00000166509">
    <property type="expression patterns" value="Expressed in tibia and 56 other cell types or tissues"/>
</dbReference>
<dbReference type="ExpressionAtlas" id="O75596">
    <property type="expression patterns" value="baseline and differential"/>
</dbReference>
<dbReference type="GO" id="GO:0005615">
    <property type="term" value="C:extracellular space"/>
    <property type="evidence" value="ECO:0000318"/>
    <property type="project" value="GO_Central"/>
</dbReference>
<dbReference type="GO" id="GO:0030246">
    <property type="term" value="F:carbohydrate binding"/>
    <property type="evidence" value="ECO:0000304"/>
    <property type="project" value="ProtInc"/>
</dbReference>
<dbReference type="GO" id="GO:0001503">
    <property type="term" value="P:ossification"/>
    <property type="evidence" value="ECO:0000318"/>
    <property type="project" value="GO_Central"/>
</dbReference>
<dbReference type="GO" id="GO:0001501">
    <property type="term" value="P:skeletal system development"/>
    <property type="evidence" value="ECO:0000304"/>
    <property type="project" value="ProtInc"/>
</dbReference>
<dbReference type="CDD" id="cd03596">
    <property type="entry name" value="CLECT_tetranectin_like"/>
    <property type="match status" value="1"/>
</dbReference>
<dbReference type="FunFam" id="3.10.100.10:FF:000010">
    <property type="entry name" value="C-type lectin domain family 3 member A"/>
    <property type="match status" value="1"/>
</dbReference>
<dbReference type="Gene3D" id="3.10.100.10">
    <property type="entry name" value="Mannose-Binding Protein A, subunit A"/>
    <property type="match status" value="1"/>
</dbReference>
<dbReference type="InterPro" id="IPR001304">
    <property type="entry name" value="C-type_lectin-like"/>
</dbReference>
<dbReference type="InterPro" id="IPR016186">
    <property type="entry name" value="C-type_lectin-like/link_sf"/>
</dbReference>
<dbReference type="InterPro" id="IPR018378">
    <property type="entry name" value="C-type_lectin_CS"/>
</dbReference>
<dbReference type="InterPro" id="IPR051663">
    <property type="entry name" value="CLec_Tetranectin-domain"/>
</dbReference>
<dbReference type="InterPro" id="IPR016187">
    <property type="entry name" value="CTDL_fold"/>
</dbReference>
<dbReference type="PANTHER" id="PTHR22799:SF2">
    <property type="entry name" value="C-TYPE LECTIN DOMAIN FAMILY 3 MEMBER A"/>
    <property type="match status" value="1"/>
</dbReference>
<dbReference type="PANTHER" id="PTHR22799">
    <property type="entry name" value="TETRANECTIN-RELATED"/>
    <property type="match status" value="1"/>
</dbReference>
<dbReference type="Pfam" id="PF00059">
    <property type="entry name" value="Lectin_C"/>
    <property type="match status" value="1"/>
</dbReference>
<dbReference type="SMART" id="SM00034">
    <property type="entry name" value="CLECT"/>
    <property type="match status" value="1"/>
</dbReference>
<dbReference type="SUPFAM" id="SSF56436">
    <property type="entry name" value="C-type lectin-like"/>
    <property type="match status" value="1"/>
</dbReference>
<dbReference type="PROSITE" id="PS00615">
    <property type="entry name" value="C_TYPE_LECTIN_1"/>
    <property type="match status" value="1"/>
</dbReference>
<dbReference type="PROSITE" id="PS50041">
    <property type="entry name" value="C_TYPE_LECTIN_2"/>
    <property type="match status" value="1"/>
</dbReference>
<proteinExistence type="evidence at protein level"/>
<comment type="function">
    <text>Promotes cell adhesion to laminin-332 and fibronectin.</text>
</comment>
<comment type="subcellular location">
    <subcellularLocation>
        <location evidence="3">Secreted</location>
    </subcellularLocation>
</comment>
<comment type="tissue specificity">
    <text evidence="3">Restricted to cartilage and breast. Also expressed in breast cancers.</text>
</comment>
<comment type="sequence caution" evidence="4">
    <conflict type="erroneous initiation">
        <sequence resource="EMBL-CDS" id="AAQ88742"/>
    </conflict>
    <text>Extended N-terminus.</text>
</comment>
<comment type="online information" name="Functional Glycomics Gateway - Glycan Binding">
    <link uri="http://www.functionalglycomics.org/glycomics/GBPServlet?&amp;operationType=view&amp;cbpId=cbp_hum_Ctlect_258"/>
    <text>Cartilage C-Type lectin</text>
</comment>
<sequence>MAKNGLVICILVITLLLDQTTSHTSRLKARKHSKRRVRDKDGDLKTQIEKLWTEVNALKEIQALQTVCLRGTKVHKKCYLASEGLKHFHEANEDCISKGGILVIPRNSDEINALQDYGKRSLPGVNDFWLGINDMVTEGKFVDVNGIAISFLNWDRAQPNGGKRENCVLFSQSAQGKWSDEACRSSKRYICEFTIPQ</sequence>
<feature type="signal peptide" evidence="3">
    <location>
        <begin position="1"/>
        <end position="22"/>
    </location>
</feature>
<feature type="chain" id="PRO_0000017374" description="C-type lectin domain family 3 member A">
    <location>
        <begin position="23"/>
        <end position="197"/>
    </location>
</feature>
<feature type="domain" description="C-type lectin" evidence="1">
    <location>
        <begin position="74"/>
        <end position="192"/>
    </location>
</feature>
<feature type="disulfide bond" evidence="1">
    <location>
        <begin position="68"/>
        <end position="78"/>
    </location>
</feature>
<feature type="disulfide bond" evidence="1">
    <location>
        <begin position="95"/>
        <end position="191"/>
    </location>
</feature>
<feature type="disulfide bond" evidence="1">
    <location>
        <begin position="167"/>
        <end position="183"/>
    </location>
</feature>
<feature type="sequence variant" id="VAR_021259" description="In dbSNP:rs2072663." evidence="2">
    <original>Q</original>
    <variation>K</variation>
    <location>
        <position position="197"/>
    </location>
</feature>
<reference key="1">
    <citation type="journal article" date="1999" name="Biochim. Biophys. Acta">
        <title>The cartilage-derived, C-type lectin (CLECSF1): structure of the gene and chromosomal location.</title>
        <authorList>
            <person name="Neame P.J."/>
            <person name="Tapp H."/>
            <person name="Grimm D.R."/>
        </authorList>
    </citation>
    <scope>NUCLEOTIDE SEQUENCE [GENOMIC DNA]</scope>
    <source>
        <tissue>Cartilage</tissue>
    </source>
</reference>
<reference key="2">
    <citation type="journal article" date="2003" name="Genome Res.">
        <title>The secreted protein discovery initiative (SPDI), a large-scale effort to identify novel human secreted and transmembrane proteins: a bioinformatics assessment.</title>
        <authorList>
            <person name="Clark H.F."/>
            <person name="Gurney A.L."/>
            <person name="Abaya E."/>
            <person name="Baker K."/>
            <person name="Baldwin D.T."/>
            <person name="Brush J."/>
            <person name="Chen J."/>
            <person name="Chow B."/>
            <person name="Chui C."/>
            <person name="Crowley C."/>
            <person name="Currell B."/>
            <person name="Deuel B."/>
            <person name="Dowd P."/>
            <person name="Eaton D."/>
            <person name="Foster J.S."/>
            <person name="Grimaldi C."/>
            <person name="Gu Q."/>
            <person name="Hass P.E."/>
            <person name="Heldens S."/>
            <person name="Huang A."/>
            <person name="Kim H.S."/>
            <person name="Klimowski L."/>
            <person name="Jin Y."/>
            <person name="Johnson S."/>
            <person name="Lee J."/>
            <person name="Lewis L."/>
            <person name="Liao D."/>
            <person name="Mark M.R."/>
            <person name="Robbie E."/>
            <person name="Sanchez C."/>
            <person name="Schoenfeld J."/>
            <person name="Seshagiri S."/>
            <person name="Simmons L."/>
            <person name="Singh J."/>
            <person name="Smith V."/>
            <person name="Stinson J."/>
            <person name="Vagts A."/>
            <person name="Vandlen R.L."/>
            <person name="Watanabe C."/>
            <person name="Wieand D."/>
            <person name="Woods K."/>
            <person name="Xie M.-H."/>
            <person name="Yansura D.G."/>
            <person name="Yi S."/>
            <person name="Yu G."/>
            <person name="Yuan J."/>
            <person name="Zhang M."/>
            <person name="Zhang Z."/>
            <person name="Goddard A.D."/>
            <person name="Wood W.I."/>
            <person name="Godowski P.J."/>
            <person name="Gray A.M."/>
        </authorList>
    </citation>
    <scope>NUCLEOTIDE SEQUENCE [LARGE SCALE MRNA]</scope>
    <scope>VARIANT LYS-197</scope>
</reference>
<reference key="3">
    <citation type="journal article" date="2004" name="Nat. Genet.">
        <title>Complete sequencing and characterization of 21,243 full-length human cDNAs.</title>
        <authorList>
            <person name="Ota T."/>
            <person name="Suzuki Y."/>
            <person name="Nishikawa T."/>
            <person name="Otsuki T."/>
            <person name="Sugiyama T."/>
            <person name="Irie R."/>
            <person name="Wakamatsu A."/>
            <person name="Hayashi K."/>
            <person name="Sato H."/>
            <person name="Nagai K."/>
            <person name="Kimura K."/>
            <person name="Makita H."/>
            <person name="Sekine M."/>
            <person name="Obayashi M."/>
            <person name="Nishi T."/>
            <person name="Shibahara T."/>
            <person name="Tanaka T."/>
            <person name="Ishii S."/>
            <person name="Yamamoto J."/>
            <person name="Saito K."/>
            <person name="Kawai Y."/>
            <person name="Isono Y."/>
            <person name="Nakamura Y."/>
            <person name="Nagahari K."/>
            <person name="Murakami K."/>
            <person name="Yasuda T."/>
            <person name="Iwayanagi T."/>
            <person name="Wagatsuma M."/>
            <person name="Shiratori A."/>
            <person name="Sudo H."/>
            <person name="Hosoiri T."/>
            <person name="Kaku Y."/>
            <person name="Kodaira H."/>
            <person name="Kondo H."/>
            <person name="Sugawara M."/>
            <person name="Takahashi M."/>
            <person name="Kanda K."/>
            <person name="Yokoi T."/>
            <person name="Furuya T."/>
            <person name="Kikkawa E."/>
            <person name="Omura Y."/>
            <person name="Abe K."/>
            <person name="Kamihara K."/>
            <person name="Katsuta N."/>
            <person name="Sato K."/>
            <person name="Tanikawa M."/>
            <person name="Yamazaki M."/>
            <person name="Ninomiya K."/>
            <person name="Ishibashi T."/>
            <person name="Yamashita H."/>
            <person name="Murakawa K."/>
            <person name="Fujimori K."/>
            <person name="Tanai H."/>
            <person name="Kimata M."/>
            <person name="Watanabe M."/>
            <person name="Hiraoka S."/>
            <person name="Chiba Y."/>
            <person name="Ishida S."/>
            <person name="Ono Y."/>
            <person name="Takiguchi S."/>
            <person name="Watanabe S."/>
            <person name="Yosida M."/>
            <person name="Hotuta T."/>
            <person name="Kusano J."/>
            <person name="Kanehori K."/>
            <person name="Takahashi-Fujii A."/>
            <person name="Hara H."/>
            <person name="Tanase T.-O."/>
            <person name="Nomura Y."/>
            <person name="Togiya S."/>
            <person name="Komai F."/>
            <person name="Hara R."/>
            <person name="Takeuchi K."/>
            <person name="Arita M."/>
            <person name="Imose N."/>
            <person name="Musashino K."/>
            <person name="Yuuki H."/>
            <person name="Oshima A."/>
            <person name="Sasaki N."/>
            <person name="Aotsuka S."/>
            <person name="Yoshikawa Y."/>
            <person name="Matsunawa H."/>
            <person name="Ichihara T."/>
            <person name="Shiohata N."/>
            <person name="Sano S."/>
            <person name="Moriya S."/>
            <person name="Momiyama H."/>
            <person name="Satoh N."/>
            <person name="Takami S."/>
            <person name="Terashima Y."/>
            <person name="Suzuki O."/>
            <person name="Nakagawa S."/>
            <person name="Senoh A."/>
            <person name="Mizoguchi H."/>
            <person name="Goto Y."/>
            <person name="Shimizu F."/>
            <person name="Wakebe H."/>
            <person name="Hishigaki H."/>
            <person name="Watanabe T."/>
            <person name="Sugiyama A."/>
            <person name="Takemoto M."/>
            <person name="Kawakami B."/>
            <person name="Yamazaki M."/>
            <person name="Watanabe K."/>
            <person name="Kumagai A."/>
            <person name="Itakura S."/>
            <person name="Fukuzumi Y."/>
            <person name="Fujimori Y."/>
            <person name="Komiyama M."/>
            <person name="Tashiro H."/>
            <person name="Tanigami A."/>
            <person name="Fujiwara T."/>
            <person name="Ono T."/>
            <person name="Yamada K."/>
            <person name="Fujii Y."/>
            <person name="Ozaki K."/>
            <person name="Hirao M."/>
            <person name="Ohmori Y."/>
            <person name="Kawabata A."/>
            <person name="Hikiji T."/>
            <person name="Kobatake N."/>
            <person name="Inagaki H."/>
            <person name="Ikema Y."/>
            <person name="Okamoto S."/>
            <person name="Okitani R."/>
            <person name="Kawakami T."/>
            <person name="Noguchi S."/>
            <person name="Itoh T."/>
            <person name="Shigeta K."/>
            <person name="Senba T."/>
            <person name="Matsumura K."/>
            <person name="Nakajima Y."/>
            <person name="Mizuno T."/>
            <person name="Morinaga M."/>
            <person name="Sasaki M."/>
            <person name="Togashi T."/>
            <person name="Oyama M."/>
            <person name="Hata H."/>
            <person name="Watanabe M."/>
            <person name="Komatsu T."/>
            <person name="Mizushima-Sugano J."/>
            <person name="Satoh T."/>
            <person name="Shirai Y."/>
            <person name="Takahashi Y."/>
            <person name="Nakagawa K."/>
            <person name="Okumura K."/>
            <person name="Nagase T."/>
            <person name="Nomura N."/>
            <person name="Kikuchi H."/>
            <person name="Masuho Y."/>
            <person name="Yamashita R."/>
            <person name="Nakai K."/>
            <person name="Yada T."/>
            <person name="Nakamura Y."/>
            <person name="Ohara O."/>
            <person name="Isogai T."/>
            <person name="Sugano S."/>
        </authorList>
    </citation>
    <scope>NUCLEOTIDE SEQUENCE [LARGE SCALE MRNA]</scope>
    <source>
        <tissue>Mammary gland</tissue>
    </source>
</reference>
<reference key="4">
    <citation type="journal article" date="2004" name="Genome Res.">
        <title>The status, quality, and expansion of the NIH full-length cDNA project: the Mammalian Gene Collection (MGC).</title>
        <authorList>
            <consortium name="The MGC Project Team"/>
        </authorList>
    </citation>
    <scope>NUCLEOTIDE SEQUENCE [LARGE SCALE MRNA]</scope>
</reference>
<reference key="5">
    <citation type="journal article" date="2009" name="J. Cell. Biochem.">
        <title>Matrilysin (MMP-7) cleaves C-type lectin domain family 3 member A (CLEC3A) on tumor cell surface and modulates its cell adhesion activity.</title>
        <authorList>
            <person name="Tsunezumi J."/>
            <person name="Higashi S."/>
            <person name="Miyazaki K."/>
        </authorList>
    </citation>
    <scope>PROTEIN SEQUENCE OF 23-48; 58-77 AND 152-163</scope>
    <scope>CLEAVAGE OF INITIATOR METHIONINE</scope>
    <scope>SUBCELLULAR LOCATION</scope>
    <scope>TISSUE SPECIFICITY</scope>
</reference>
<evidence type="ECO:0000255" key="1">
    <source>
        <dbReference type="PROSITE-ProRule" id="PRU00040"/>
    </source>
</evidence>
<evidence type="ECO:0000269" key="2">
    <source>
    </source>
</evidence>
<evidence type="ECO:0000269" key="3">
    <source>
    </source>
</evidence>
<evidence type="ECO:0000305" key="4"/>
<keyword id="KW-0903">Direct protein sequencing</keyword>
<keyword id="KW-1015">Disulfide bond</keyword>
<keyword id="KW-0430">Lectin</keyword>
<keyword id="KW-1267">Proteomics identification</keyword>
<keyword id="KW-1185">Reference proteome</keyword>
<keyword id="KW-0964">Secreted</keyword>
<keyword id="KW-0732">Signal</keyword>
<gene>
    <name type="primary">CLEC3A</name>
    <name type="synonym">CLECSF1</name>
    <name type="ORF">UNQ700/PRO1345</name>
</gene>
<name>CLC3A_HUMAN</name>
<protein>
    <recommendedName>
        <fullName>C-type lectin domain family 3 member A</fullName>
    </recommendedName>
    <alternativeName>
        <fullName>C-type lectin superfamily member 1</fullName>
    </alternativeName>
    <alternativeName>
        <fullName>Cartilage-derived C-type lectin</fullName>
    </alternativeName>
</protein>
<organism>
    <name type="scientific">Homo sapiens</name>
    <name type="common">Human</name>
    <dbReference type="NCBI Taxonomy" id="9606"/>
    <lineage>
        <taxon>Eukaryota</taxon>
        <taxon>Metazoa</taxon>
        <taxon>Chordata</taxon>
        <taxon>Craniata</taxon>
        <taxon>Vertebrata</taxon>
        <taxon>Euteleostomi</taxon>
        <taxon>Mammalia</taxon>
        <taxon>Eutheria</taxon>
        <taxon>Euarchontoglires</taxon>
        <taxon>Primates</taxon>
        <taxon>Haplorrhini</taxon>
        <taxon>Catarrhini</taxon>
        <taxon>Hominidae</taxon>
        <taxon>Homo</taxon>
    </lineage>
</organism>
<accession>O75596</accession>
<accession>B2R8C4</accession>
<accession>Q3SX91</accession>
<accession>Q6UXF5</accession>